<dbReference type="EMBL" id="L43967">
    <property type="protein sequence ID" value="AAC71503.1"/>
    <property type="molecule type" value="Genomic_DNA"/>
</dbReference>
<dbReference type="EMBL" id="U01706">
    <property type="protein sequence ID" value="AAB01018.1"/>
    <property type="molecule type" value="Genomic_DNA"/>
</dbReference>
<dbReference type="PIR" id="A64231">
    <property type="entry name" value="A64231"/>
</dbReference>
<dbReference type="RefSeq" id="WP_010869405.1">
    <property type="nucleotide sequence ID" value="NC_000908.2"/>
</dbReference>
<dbReference type="PDB" id="4NZR">
    <property type="method" value="X-ray"/>
    <property type="resolution" value="1.65 A"/>
    <property type="chains" value="M=74-468"/>
</dbReference>
<dbReference type="PDB" id="4NZT">
    <property type="method" value="X-ray"/>
    <property type="resolution" value="2.50 A"/>
    <property type="chains" value="M=74-468"/>
</dbReference>
<dbReference type="PDBsum" id="4NZR"/>
<dbReference type="PDBsum" id="4NZT"/>
<dbReference type="EMDB" id="EMD-5834"/>
<dbReference type="EMDB" id="EMD-5835"/>
<dbReference type="EMDB" id="EMD-5836"/>
<dbReference type="SMR" id="P47523"/>
<dbReference type="STRING" id="243273.MG_281"/>
<dbReference type="GeneID" id="88282437"/>
<dbReference type="KEGG" id="mge:MG_281"/>
<dbReference type="eggNOG" id="ENOG5030MY6">
    <property type="taxonomic scope" value="Bacteria"/>
</dbReference>
<dbReference type="HOGENOM" id="CLU_468358_0_0_14"/>
<dbReference type="InParanoid" id="P47523"/>
<dbReference type="OrthoDB" id="401414at2"/>
<dbReference type="BioCyc" id="MGEN243273:G1GJ2-339-MONOMER"/>
<dbReference type="EvolutionaryTrace" id="P47523"/>
<dbReference type="Proteomes" id="UP000000807">
    <property type="component" value="Chromosome"/>
</dbReference>
<dbReference type="GO" id="GO:0016020">
    <property type="term" value="C:membrane"/>
    <property type="evidence" value="ECO:0007669"/>
    <property type="project" value="UniProtKB-SubCell"/>
</dbReference>
<dbReference type="DisProt" id="DP02590"/>
<dbReference type="Gene3D" id="2.160.20.180">
    <property type="match status" value="1"/>
</dbReference>
<dbReference type="Gene3D" id="3.30.110.180">
    <property type="match status" value="1"/>
</dbReference>
<dbReference type="Gene3D" id="3.30.1370.200">
    <property type="match status" value="1"/>
</dbReference>
<dbReference type="InterPro" id="IPR054348">
    <property type="entry name" value="M_C"/>
</dbReference>
<dbReference type="InterPro" id="IPR030943">
    <property type="entry name" value="M_MG281"/>
</dbReference>
<dbReference type="InterPro" id="IPR054349">
    <property type="entry name" value="M_smaller_dom"/>
</dbReference>
<dbReference type="InterPro" id="IPR048475">
    <property type="entry name" value="MG281-like_Ab-bd"/>
</dbReference>
<dbReference type="InterPro" id="IPR030942">
    <property type="entry name" value="Mycoplas_M_dom"/>
</dbReference>
<dbReference type="NCBIfam" id="TIGR04524">
    <property type="entry name" value="mycoplas_M_dom"/>
    <property type="match status" value="1"/>
</dbReference>
<dbReference type="NCBIfam" id="TIGR04525">
    <property type="entry name" value="prot_M_MG281"/>
    <property type="match status" value="1"/>
</dbReference>
<dbReference type="Pfam" id="PF22806">
    <property type="entry name" value="M_C"/>
    <property type="match status" value="1"/>
</dbReference>
<dbReference type="Pfam" id="PF20757">
    <property type="entry name" value="M_large_dom"/>
    <property type="match status" value="1"/>
</dbReference>
<dbReference type="Pfam" id="PF22805">
    <property type="entry name" value="M_smaller_dom"/>
    <property type="match status" value="1"/>
</dbReference>
<reference key="1">
    <citation type="journal article" date="1995" name="Science">
        <title>The minimal gene complement of Mycoplasma genitalium.</title>
        <authorList>
            <person name="Fraser C.M."/>
            <person name="Gocayne J.D."/>
            <person name="White O."/>
            <person name="Adams M.D."/>
            <person name="Clayton R.A."/>
            <person name="Fleischmann R.D."/>
            <person name="Bult C.J."/>
            <person name="Kerlavage A.R."/>
            <person name="Sutton G.G."/>
            <person name="Kelley J.M."/>
            <person name="Fritchman J.L."/>
            <person name="Weidman J.F."/>
            <person name="Small K.V."/>
            <person name="Sandusky M."/>
            <person name="Fuhrmann J.L."/>
            <person name="Nguyen D.T."/>
            <person name="Utterback T.R."/>
            <person name="Saudek D.M."/>
            <person name="Phillips C.A."/>
            <person name="Merrick J.M."/>
            <person name="Tomb J.-F."/>
            <person name="Dougherty B.A."/>
            <person name="Bott K.F."/>
            <person name="Hu P.-C."/>
            <person name="Lucier T.S."/>
            <person name="Peterson S.N."/>
            <person name="Smith H.O."/>
            <person name="Hutchison C.A. III"/>
            <person name="Venter J.C."/>
        </authorList>
    </citation>
    <scope>NUCLEOTIDE SEQUENCE [LARGE SCALE GENOMIC DNA]</scope>
    <source>
        <strain>ATCC 33530 / DSM 19775 / NCTC 10195 / G37</strain>
    </source>
</reference>
<reference key="2">
    <citation type="journal article" date="1993" name="J. Bacteriol.">
        <title>A survey of the Mycoplasma genitalium genome by using random sequencing.</title>
        <authorList>
            <person name="Peterson S.N."/>
            <person name="Hu P.-C."/>
            <person name="Bott K.F."/>
            <person name="Hutchison C.A. III"/>
        </authorList>
    </citation>
    <scope>NUCLEOTIDE SEQUENCE [GENOMIC DNA] OF 250-350</scope>
    <source>
        <strain>ATCC 33530 / DSM 19775 / NCTC 10195 / G37</strain>
    </source>
</reference>
<sequence>MQFKKHKNSVKFKRKLFWTIGVLGAGALTTFSAVMITNLVNQSGYALVASGRSGNLGFKLFSTQSPSAEVKLKSLSLNDGSYQSEIDLSGGANFREKFRNFANELSEAITNSPKGLDRPVPKTEISGLIKTGDNFITPSFKAGYYDHVASDGSLLSYYQSTEYFNNRVLMPILQTTNGTLMANNRGYDDVFRQVPSFSGWSNTKATTVSTSNNLTYDKWTYFAAKGSPLYDSYPNHFFEDVKTLAIDAKDISALKTTIDSEKPTYLIIRGLSGNGSQLNELQLPESVKKVSLYGDYTGVNVAKQIFANVVELEFYSTSKANSFGFNPLVLGSKTNVIYDLFASKPFTHIDLTQVTLQNSDNSAIDANKLKQAVGDIYNYRRFERQFQGYFAGGYIDKYLVKNVNTNKDSDDDLVYRSLKELNLHLEEAYREGDNTYYRVNENYYPGASIYENERASRDSEFQNEILKRAEQNGVTFDENIKRITASGKYSVQFQKLENDTDSSLERMTKAVEGLVTVIGEEKFETVDITGVSSDTNEVKSLAKELKTNALGVKLKL</sequence>
<protein>
    <recommendedName>
        <fullName>Uncharacterized protein MG281</fullName>
    </recommendedName>
</protein>
<accession>P47523</accession>
<accession>Q49187</accession>
<name>Y281_MYCGE</name>
<gene>
    <name type="ordered locus">MG281</name>
</gene>
<comment type="subcellular location">
    <subcellularLocation>
        <location evidence="2">Membrane</location>
        <topology evidence="2">Single-pass membrane protein</topology>
    </subcellularLocation>
</comment>
<evidence type="ECO:0000255" key="1"/>
<evidence type="ECO:0000305" key="2"/>
<evidence type="ECO:0007829" key="3">
    <source>
        <dbReference type="PDB" id="4NZR"/>
    </source>
</evidence>
<evidence type="ECO:0007829" key="4">
    <source>
        <dbReference type="PDB" id="4NZT"/>
    </source>
</evidence>
<proteinExistence type="evidence at protein level"/>
<keyword id="KW-0002">3D-structure</keyword>
<keyword id="KW-0472">Membrane</keyword>
<keyword id="KW-1185">Reference proteome</keyword>
<keyword id="KW-0812">Transmembrane</keyword>
<keyword id="KW-1133">Transmembrane helix</keyword>
<organism>
    <name type="scientific">Mycoplasma genitalium (strain ATCC 33530 / DSM 19775 / NCTC 10195 / G37)</name>
    <name type="common">Mycoplasmoides genitalium</name>
    <dbReference type="NCBI Taxonomy" id="243273"/>
    <lineage>
        <taxon>Bacteria</taxon>
        <taxon>Bacillati</taxon>
        <taxon>Mycoplasmatota</taxon>
        <taxon>Mycoplasmoidales</taxon>
        <taxon>Mycoplasmoidaceae</taxon>
        <taxon>Mycoplasmoides</taxon>
    </lineage>
</organism>
<feature type="chain" id="PRO_0000210508" description="Uncharacterized protein MG281">
    <location>
        <begin position="1"/>
        <end position="556"/>
    </location>
</feature>
<feature type="transmembrane region" description="Helical" evidence="1">
    <location>
        <begin position="16"/>
        <end position="36"/>
    </location>
</feature>
<feature type="sequence conflict" description="In Ref. 2; AAB01018." evidence="2" ref="2">
    <original>HID</original>
    <variation>TLI</variation>
    <location>
        <begin position="348"/>
        <end position="350"/>
    </location>
</feature>
<feature type="strand" evidence="3">
    <location>
        <begin position="82"/>
        <end position="87"/>
    </location>
</feature>
<feature type="helix" evidence="3">
    <location>
        <begin position="95"/>
        <end position="111"/>
    </location>
</feature>
<feature type="strand" evidence="3">
    <location>
        <begin position="116"/>
        <end position="118"/>
    </location>
</feature>
<feature type="strand" evidence="3">
    <location>
        <begin position="120"/>
        <end position="123"/>
    </location>
</feature>
<feature type="strand" evidence="3">
    <location>
        <begin position="125"/>
        <end position="130"/>
    </location>
</feature>
<feature type="strand" evidence="3">
    <location>
        <begin position="135"/>
        <end position="137"/>
    </location>
</feature>
<feature type="strand" evidence="3">
    <location>
        <begin position="140"/>
        <end position="149"/>
    </location>
</feature>
<feature type="strand" evidence="3">
    <location>
        <begin position="154"/>
        <end position="159"/>
    </location>
</feature>
<feature type="strand" evidence="4">
    <location>
        <begin position="176"/>
        <end position="178"/>
    </location>
</feature>
<feature type="strand" evidence="3">
    <location>
        <begin position="181"/>
        <end position="183"/>
    </location>
</feature>
<feature type="helix" evidence="3">
    <location>
        <begin position="187"/>
        <end position="190"/>
    </location>
</feature>
<feature type="strand" evidence="3">
    <location>
        <begin position="191"/>
        <end position="194"/>
    </location>
</feature>
<feature type="strand" evidence="3">
    <location>
        <begin position="206"/>
        <end position="210"/>
    </location>
</feature>
<feature type="turn" evidence="3">
    <location>
        <begin position="211"/>
        <end position="213"/>
    </location>
</feature>
<feature type="strand" evidence="3">
    <location>
        <begin position="214"/>
        <end position="222"/>
    </location>
</feature>
<feature type="helix" evidence="3">
    <location>
        <begin position="229"/>
        <end position="232"/>
    </location>
</feature>
<feature type="strand" evidence="3">
    <location>
        <begin position="241"/>
        <end position="247"/>
    </location>
</feature>
<feature type="helix" evidence="3">
    <location>
        <begin position="248"/>
        <end position="250"/>
    </location>
</feature>
<feature type="turn" evidence="3">
    <location>
        <begin position="251"/>
        <end position="254"/>
    </location>
</feature>
<feature type="helix" evidence="3">
    <location>
        <begin position="255"/>
        <end position="261"/>
    </location>
</feature>
<feature type="strand" evidence="3">
    <location>
        <begin position="264"/>
        <end position="273"/>
    </location>
</feature>
<feature type="helix" evidence="3">
    <location>
        <begin position="276"/>
        <end position="280"/>
    </location>
</feature>
<feature type="strand" evidence="3">
    <location>
        <begin position="289"/>
        <end position="299"/>
    </location>
</feature>
<feature type="strand" evidence="3">
    <location>
        <begin position="310"/>
        <end position="316"/>
    </location>
</feature>
<feature type="helix" evidence="3">
    <location>
        <begin position="327"/>
        <end position="329"/>
    </location>
</feature>
<feature type="turn" evidence="3">
    <location>
        <begin position="340"/>
        <end position="342"/>
    </location>
</feature>
<feature type="strand" evidence="3">
    <location>
        <begin position="348"/>
        <end position="350"/>
    </location>
</feature>
<feature type="strand" evidence="3">
    <location>
        <begin position="361"/>
        <end position="364"/>
    </location>
</feature>
<feature type="helix" evidence="3">
    <location>
        <begin position="366"/>
        <end position="377"/>
    </location>
</feature>
<feature type="turn" evidence="3">
    <location>
        <begin position="378"/>
        <end position="382"/>
    </location>
</feature>
<feature type="helix" evidence="3">
    <location>
        <begin position="384"/>
        <end position="386"/>
    </location>
</feature>
<feature type="strand" evidence="3">
    <location>
        <begin position="397"/>
        <end position="401"/>
    </location>
</feature>
<feature type="strand" evidence="3">
    <location>
        <begin position="404"/>
        <end position="406"/>
    </location>
</feature>
<feature type="helix" evidence="3">
    <location>
        <begin position="407"/>
        <end position="419"/>
    </location>
</feature>
<feature type="turn" evidence="3">
    <location>
        <begin position="420"/>
        <end position="422"/>
    </location>
</feature>
<feature type="strand" evidence="3">
    <location>
        <begin position="424"/>
        <end position="431"/>
    </location>
</feature>
<feature type="strand" evidence="3">
    <location>
        <begin position="434"/>
        <end position="442"/>
    </location>
</feature>
<feature type="turn" evidence="4">
    <location>
        <begin position="445"/>
        <end position="447"/>
    </location>
</feature>
<feature type="helix" evidence="3">
    <location>
        <begin position="449"/>
        <end position="457"/>
    </location>
</feature>
<feature type="helix" evidence="3">
    <location>
        <begin position="459"/>
        <end position="467"/>
    </location>
</feature>